<organism>
    <name type="scientific">Gallus gallus</name>
    <name type="common">Chicken</name>
    <dbReference type="NCBI Taxonomy" id="9031"/>
    <lineage>
        <taxon>Eukaryota</taxon>
        <taxon>Metazoa</taxon>
        <taxon>Chordata</taxon>
        <taxon>Craniata</taxon>
        <taxon>Vertebrata</taxon>
        <taxon>Euteleostomi</taxon>
        <taxon>Archelosauria</taxon>
        <taxon>Archosauria</taxon>
        <taxon>Dinosauria</taxon>
        <taxon>Saurischia</taxon>
        <taxon>Theropoda</taxon>
        <taxon>Coelurosauria</taxon>
        <taxon>Aves</taxon>
        <taxon>Neognathae</taxon>
        <taxon>Galloanserae</taxon>
        <taxon>Galliformes</taxon>
        <taxon>Phasianidae</taxon>
        <taxon>Phasianinae</taxon>
        <taxon>Gallus</taxon>
    </lineage>
</organism>
<protein>
    <recommendedName>
        <fullName>Annexin A5</fullName>
    </recommendedName>
    <alternativeName>
        <fullName>Anchorin CII</fullName>
    </alternativeName>
    <alternativeName>
        <fullName>Annexin V</fullName>
    </alternativeName>
    <alternativeName>
        <fullName>Annexin-5</fullName>
    </alternativeName>
    <alternativeName>
        <fullName>Calphobindin I</fullName>
        <shortName>CPB-I</shortName>
    </alternativeName>
    <alternativeName>
        <fullName>Endonexin II</fullName>
    </alternativeName>
    <alternativeName>
        <fullName>Lipocortin V</fullName>
    </alternativeName>
    <alternativeName>
        <fullName>Placental anticoagulant protein I</fullName>
        <shortName>PAP-I</shortName>
    </alternativeName>
    <alternativeName>
        <fullName>Thromboplastin inhibitor</fullName>
    </alternativeName>
    <alternativeName>
        <fullName>Vascular anticoagulant-alpha</fullName>
        <shortName>VAC-alpha</shortName>
    </alternativeName>
</protein>
<sequence>MAKYTRGTVTAFSPFDARADAEALRKAMKGMGTDEETILKILTSRNNAQRQEIASAFKTLFGRDLVDDLKSELTGKFETLMVSLMRPARIFDAHALKHAIKGAGTNEKVLTEILASRTPAEVQNIKQVYMQEYEANLEDKITGETSGHFQRLLVVLLQANRDPDGRVDEALVEKDAQVLFRAGELKWGTDEETFITILGTRSVSHLRRVFDKYMTISGFQIEETIDRETSGDLEKLLLAVVKCIRSVPAYFAETLYYSMKGAGTDDDTLIRVMVSRSEIDLLDIRHEFRKNFAKSLYQMIQKDTSGDYRKALLLLCGGDDE</sequence>
<dbReference type="EMBL" id="M30971">
    <property type="protein sequence ID" value="AAA48591.1"/>
    <property type="status" value="ALT_SEQ"/>
    <property type="molecule type" value="mRNA"/>
</dbReference>
<dbReference type="EMBL" id="U01680">
    <property type="protein sequence ID" value="AAB39917.1"/>
    <property type="molecule type" value="Genomic_DNA"/>
</dbReference>
<dbReference type="EMBL" id="U01671">
    <property type="protein sequence ID" value="AAB39917.1"/>
    <property type="status" value="JOINED"/>
    <property type="molecule type" value="Genomic_RNA"/>
</dbReference>
<dbReference type="EMBL" id="U01672">
    <property type="protein sequence ID" value="AAB39917.1"/>
    <property type="status" value="JOINED"/>
    <property type="molecule type" value="Genomic_DNA"/>
</dbReference>
<dbReference type="EMBL" id="U01673">
    <property type="protein sequence ID" value="AAB39917.1"/>
    <property type="status" value="JOINED"/>
    <property type="molecule type" value="Genomic_DNA"/>
</dbReference>
<dbReference type="EMBL" id="U01675">
    <property type="protein sequence ID" value="AAB39917.1"/>
    <property type="status" value="JOINED"/>
    <property type="molecule type" value="Genomic_DNA"/>
</dbReference>
<dbReference type="EMBL" id="U01676">
    <property type="protein sequence ID" value="AAB39917.1"/>
    <property type="status" value="JOINED"/>
    <property type="molecule type" value="Genomic_DNA"/>
</dbReference>
<dbReference type="EMBL" id="U01677">
    <property type="protein sequence ID" value="AAB39917.1"/>
    <property type="status" value="JOINED"/>
    <property type="molecule type" value="Genomic_DNA"/>
</dbReference>
<dbReference type="EMBL" id="U01678">
    <property type="protein sequence ID" value="AAB39917.1"/>
    <property type="status" value="JOINED"/>
    <property type="molecule type" value="Genomic_DNA"/>
</dbReference>
<dbReference type="EMBL" id="U01679">
    <property type="protein sequence ID" value="AAB39917.1"/>
    <property type="status" value="JOINED"/>
    <property type="molecule type" value="Genomic_DNA"/>
</dbReference>
<dbReference type="PIR" id="A35381">
    <property type="entry name" value="LUCH5"/>
</dbReference>
<dbReference type="RefSeq" id="NP_001026709.1">
    <property type="nucleotide sequence ID" value="NM_001031538.2"/>
</dbReference>
<dbReference type="RefSeq" id="NP_001384238.1">
    <property type="nucleotide sequence ID" value="NM_001397309.1"/>
</dbReference>
<dbReference type="RefSeq" id="NP_001384239.1">
    <property type="nucleotide sequence ID" value="NM_001397310.1"/>
</dbReference>
<dbReference type="RefSeq" id="NP_001384240.1">
    <property type="nucleotide sequence ID" value="NM_001397311.1"/>
</dbReference>
<dbReference type="RefSeq" id="NP_001384241.1">
    <property type="nucleotide sequence ID" value="NM_001397312.1"/>
</dbReference>
<dbReference type="RefSeq" id="XP_015131802.1">
    <property type="nucleotide sequence ID" value="XM_015276316.1"/>
</dbReference>
<dbReference type="RefSeq" id="XP_015131803.1">
    <property type="nucleotide sequence ID" value="XM_015276317.1"/>
</dbReference>
<dbReference type="RefSeq" id="XP_046772480.1">
    <property type="nucleotide sequence ID" value="XM_046916524.1"/>
</dbReference>
<dbReference type="RefSeq" id="XP_046772481.1">
    <property type="nucleotide sequence ID" value="XM_046916525.1"/>
</dbReference>
<dbReference type="RefSeq" id="XP_046772482.1">
    <property type="nucleotide sequence ID" value="XM_046916526.1"/>
</dbReference>
<dbReference type="RefSeq" id="XP_046796267.1">
    <property type="nucleotide sequence ID" value="XM_046940311.1"/>
</dbReference>
<dbReference type="RefSeq" id="XP_046796268.1">
    <property type="nucleotide sequence ID" value="XM_046940312.1"/>
</dbReference>
<dbReference type="RefSeq" id="XP_046796269.1">
    <property type="nucleotide sequence ID" value="XM_046940313.1"/>
</dbReference>
<dbReference type="PDB" id="1ALA">
    <property type="method" value="X-ray"/>
    <property type="resolution" value="2.25 A"/>
    <property type="chains" value="A=1-321"/>
</dbReference>
<dbReference type="PDB" id="1YII">
    <property type="method" value="X-ray"/>
    <property type="resolution" value="1.42 A"/>
    <property type="chains" value="A=2-321"/>
</dbReference>
<dbReference type="PDB" id="1YJ0">
    <property type="method" value="X-ray"/>
    <property type="resolution" value="2.95 A"/>
    <property type="chains" value="A=2-321"/>
</dbReference>
<dbReference type="PDBsum" id="1ALA"/>
<dbReference type="PDBsum" id="1YII"/>
<dbReference type="PDBsum" id="1YJ0"/>
<dbReference type="SMR" id="P17153"/>
<dbReference type="BioGRID" id="687731">
    <property type="interactions" value="1"/>
</dbReference>
<dbReference type="FunCoup" id="P17153">
    <property type="interactions" value="1757"/>
</dbReference>
<dbReference type="IntAct" id="P17153">
    <property type="interactions" value="1"/>
</dbReference>
<dbReference type="STRING" id="9031.ENSGALP00000055261"/>
<dbReference type="PaxDb" id="9031-ENSGALP00000019365"/>
<dbReference type="Ensembl" id="ENSGALT00010012462.1">
    <property type="protein sequence ID" value="ENSGALP00010007026.1"/>
    <property type="gene ID" value="ENSGALG00010005260.1"/>
</dbReference>
<dbReference type="GeneID" id="428767"/>
<dbReference type="KEGG" id="gga:428767"/>
<dbReference type="CTD" id="308"/>
<dbReference type="VEuPathDB" id="HostDB:geneid_428767"/>
<dbReference type="eggNOG" id="KOG0819">
    <property type="taxonomic scope" value="Eukaryota"/>
</dbReference>
<dbReference type="GeneTree" id="ENSGT00940000155988"/>
<dbReference type="InParanoid" id="P17153"/>
<dbReference type="OMA" id="LQGNRDP"/>
<dbReference type="OrthoDB" id="37886at2759"/>
<dbReference type="PhylomeDB" id="P17153"/>
<dbReference type="TreeFam" id="TF105452"/>
<dbReference type="Reactome" id="R-GGA-114608">
    <property type="pathway name" value="Platelet degranulation"/>
</dbReference>
<dbReference type="EvolutionaryTrace" id="P17153"/>
<dbReference type="PRO" id="PR:P17153"/>
<dbReference type="Proteomes" id="UP000000539">
    <property type="component" value="Chromosome 4"/>
</dbReference>
<dbReference type="Bgee" id="ENSGALG00000011885">
    <property type="expression patterns" value="Expressed in lung and 13 other cell types or tissues"/>
</dbReference>
<dbReference type="GO" id="GO:0034704">
    <property type="term" value="C:calcium channel complex"/>
    <property type="evidence" value="ECO:0000304"/>
    <property type="project" value="AgBase"/>
</dbReference>
<dbReference type="GO" id="GO:0005737">
    <property type="term" value="C:cytoplasm"/>
    <property type="evidence" value="ECO:0000318"/>
    <property type="project" value="GO_Central"/>
</dbReference>
<dbReference type="GO" id="GO:0042383">
    <property type="term" value="C:sarcolemma"/>
    <property type="evidence" value="ECO:0000318"/>
    <property type="project" value="GO_Central"/>
</dbReference>
<dbReference type="GO" id="GO:0031982">
    <property type="term" value="C:vesicle"/>
    <property type="evidence" value="ECO:0000304"/>
    <property type="project" value="AgBase"/>
</dbReference>
<dbReference type="GO" id="GO:0012506">
    <property type="term" value="C:vesicle membrane"/>
    <property type="evidence" value="ECO:0000318"/>
    <property type="project" value="GO_Central"/>
</dbReference>
<dbReference type="GO" id="GO:0005262">
    <property type="term" value="F:calcium channel activity"/>
    <property type="evidence" value="ECO:0000304"/>
    <property type="project" value="AgBase"/>
</dbReference>
<dbReference type="GO" id="GO:0005509">
    <property type="term" value="F:calcium ion binding"/>
    <property type="evidence" value="ECO:0007669"/>
    <property type="project" value="InterPro"/>
</dbReference>
<dbReference type="GO" id="GO:0005544">
    <property type="term" value="F:calcium-dependent phospholipid binding"/>
    <property type="evidence" value="ECO:0000318"/>
    <property type="project" value="GO_Central"/>
</dbReference>
<dbReference type="GO" id="GO:0001786">
    <property type="term" value="F:phosphatidylserine binding"/>
    <property type="evidence" value="ECO:0000318"/>
    <property type="project" value="GO_Central"/>
</dbReference>
<dbReference type="GO" id="GO:0055074">
    <property type="term" value="P:calcium ion homeostasis"/>
    <property type="evidence" value="ECO:0000304"/>
    <property type="project" value="AgBase"/>
</dbReference>
<dbReference type="GO" id="GO:0050819">
    <property type="term" value="P:negative regulation of coagulation"/>
    <property type="evidence" value="ECO:0007669"/>
    <property type="project" value="InterPro"/>
</dbReference>
<dbReference type="FunFam" id="1.10.220.10:FF:000002">
    <property type="entry name" value="Annexin"/>
    <property type="match status" value="1"/>
</dbReference>
<dbReference type="FunFam" id="1.10.220.10:FF:000003">
    <property type="entry name" value="Annexin"/>
    <property type="match status" value="1"/>
</dbReference>
<dbReference type="FunFam" id="1.10.220.10:FF:000004">
    <property type="entry name" value="Annexin"/>
    <property type="match status" value="1"/>
</dbReference>
<dbReference type="FunFam" id="1.10.220.10:FF:000022">
    <property type="entry name" value="Annexin A5"/>
    <property type="match status" value="1"/>
</dbReference>
<dbReference type="Gene3D" id="1.10.220.10">
    <property type="entry name" value="Annexin"/>
    <property type="match status" value="4"/>
</dbReference>
<dbReference type="InterPro" id="IPR001464">
    <property type="entry name" value="Annexin"/>
</dbReference>
<dbReference type="InterPro" id="IPR018502">
    <property type="entry name" value="Annexin_repeat"/>
</dbReference>
<dbReference type="InterPro" id="IPR018252">
    <property type="entry name" value="Annexin_repeat_CS"/>
</dbReference>
<dbReference type="InterPro" id="IPR037104">
    <property type="entry name" value="Annexin_sf"/>
</dbReference>
<dbReference type="InterPro" id="IPR002392">
    <property type="entry name" value="ANX5"/>
</dbReference>
<dbReference type="PANTHER" id="PTHR10502">
    <property type="entry name" value="ANNEXIN"/>
    <property type="match status" value="1"/>
</dbReference>
<dbReference type="PANTHER" id="PTHR10502:SF26">
    <property type="entry name" value="ANNEXIN A5"/>
    <property type="match status" value="1"/>
</dbReference>
<dbReference type="Pfam" id="PF00191">
    <property type="entry name" value="Annexin"/>
    <property type="match status" value="4"/>
</dbReference>
<dbReference type="PRINTS" id="PR00196">
    <property type="entry name" value="ANNEXIN"/>
</dbReference>
<dbReference type="PRINTS" id="PR00201">
    <property type="entry name" value="ANNEXINV"/>
</dbReference>
<dbReference type="SMART" id="SM00335">
    <property type="entry name" value="ANX"/>
    <property type="match status" value="4"/>
</dbReference>
<dbReference type="SUPFAM" id="SSF47874">
    <property type="entry name" value="Annexin"/>
    <property type="match status" value="1"/>
</dbReference>
<dbReference type="PROSITE" id="PS00223">
    <property type="entry name" value="ANNEXIN_1"/>
    <property type="match status" value="4"/>
</dbReference>
<dbReference type="PROSITE" id="PS51897">
    <property type="entry name" value="ANNEXIN_2"/>
    <property type="match status" value="4"/>
</dbReference>
<feature type="chain" id="PRO_0000067491" description="Annexin A5">
    <location>
        <begin position="1"/>
        <end position="321"/>
    </location>
</feature>
<feature type="repeat" description="Annexin 1" evidence="1">
    <location>
        <begin position="15"/>
        <end position="86"/>
    </location>
</feature>
<feature type="repeat" description="Annexin 2" evidence="1">
    <location>
        <begin position="87"/>
        <end position="158"/>
    </location>
</feature>
<feature type="repeat" description="Annexin 3" evidence="1">
    <location>
        <begin position="170"/>
        <end position="242"/>
    </location>
</feature>
<feature type="repeat" description="Annexin 4" evidence="1">
    <location>
        <begin position="246"/>
        <end position="317"/>
    </location>
</feature>
<feature type="sequence conflict" description="In Ref. 1; AA sequence." evidence="2" ref="1">
    <original>D</original>
    <variation>E</variation>
    <location>
        <position position="168"/>
    </location>
</feature>
<feature type="helix" evidence="4">
    <location>
        <begin position="17"/>
        <end position="28"/>
    </location>
</feature>
<feature type="strand" evidence="4">
    <location>
        <begin position="29"/>
        <end position="32"/>
    </location>
</feature>
<feature type="helix" evidence="4">
    <location>
        <begin position="35"/>
        <end position="44"/>
    </location>
</feature>
<feature type="helix" evidence="4">
    <location>
        <begin position="47"/>
        <end position="61"/>
    </location>
</feature>
<feature type="helix" evidence="4">
    <location>
        <begin position="65"/>
        <end position="72"/>
    </location>
</feature>
<feature type="helix" evidence="4">
    <location>
        <begin position="75"/>
        <end position="85"/>
    </location>
</feature>
<feature type="helix" evidence="4">
    <location>
        <begin position="88"/>
        <end position="100"/>
    </location>
</feature>
<feature type="strand" evidence="4">
    <location>
        <begin position="101"/>
        <end position="104"/>
    </location>
</feature>
<feature type="helix" evidence="4">
    <location>
        <begin position="107"/>
        <end position="116"/>
    </location>
</feature>
<feature type="helix" evidence="4">
    <location>
        <begin position="119"/>
        <end position="133"/>
    </location>
</feature>
<feature type="helix" evidence="4">
    <location>
        <begin position="137"/>
        <end position="144"/>
    </location>
</feature>
<feature type="helix" evidence="4">
    <location>
        <begin position="147"/>
        <end position="157"/>
    </location>
</feature>
<feature type="helix" evidence="4">
    <location>
        <begin position="169"/>
        <end position="184"/>
    </location>
</feature>
<feature type="turn" evidence="4">
    <location>
        <begin position="185"/>
        <end position="187"/>
    </location>
</feature>
<feature type="helix" evidence="4">
    <location>
        <begin position="191"/>
        <end position="200"/>
    </location>
</feature>
<feature type="helix" evidence="4">
    <location>
        <begin position="203"/>
        <end position="217"/>
    </location>
</feature>
<feature type="helix" evidence="4">
    <location>
        <begin position="221"/>
        <end position="225"/>
    </location>
</feature>
<feature type="strand" evidence="3">
    <location>
        <begin position="227"/>
        <end position="229"/>
    </location>
</feature>
<feature type="helix" evidence="4">
    <location>
        <begin position="232"/>
        <end position="245"/>
    </location>
</feature>
<feature type="helix" evidence="4">
    <location>
        <begin position="247"/>
        <end position="259"/>
    </location>
</feature>
<feature type="strand" evidence="4">
    <location>
        <begin position="260"/>
        <end position="263"/>
    </location>
</feature>
<feature type="helix" evidence="4">
    <location>
        <begin position="266"/>
        <end position="276"/>
    </location>
</feature>
<feature type="turn" evidence="4">
    <location>
        <begin position="277"/>
        <end position="280"/>
    </location>
</feature>
<feature type="helix" evidence="4">
    <location>
        <begin position="281"/>
        <end position="292"/>
    </location>
</feature>
<feature type="helix" evidence="4">
    <location>
        <begin position="296"/>
        <end position="303"/>
    </location>
</feature>
<feature type="helix" evidence="4">
    <location>
        <begin position="306"/>
        <end position="316"/>
    </location>
</feature>
<proteinExistence type="evidence at protein level"/>
<evidence type="ECO:0000255" key="1">
    <source>
        <dbReference type="PROSITE-ProRule" id="PRU01245"/>
    </source>
</evidence>
<evidence type="ECO:0000305" key="2"/>
<evidence type="ECO:0007829" key="3">
    <source>
        <dbReference type="PDB" id="1ALA"/>
    </source>
</evidence>
<evidence type="ECO:0007829" key="4">
    <source>
        <dbReference type="PDB" id="1YII"/>
    </source>
</evidence>
<keyword id="KW-0002">3D-structure</keyword>
<keyword id="KW-0041">Annexin</keyword>
<keyword id="KW-0106">Calcium</keyword>
<keyword id="KW-0111">Calcium/phospholipid-binding</keyword>
<keyword id="KW-0903">Direct protein sequencing</keyword>
<keyword id="KW-1185">Reference proteome</keyword>
<keyword id="KW-0677">Repeat</keyword>
<reference key="1">
    <citation type="journal article" date="1988" name="J. Biol. Chem.">
        <title>The structure of anchorin CII, a collagen binding protein isolated from chondrocyte membrane.</title>
        <authorList>
            <person name="Fernandez M.-P."/>
            <person name="Selmin O."/>
            <person name="Martin G.R."/>
            <person name="Yamada Y."/>
            <person name="Pfaeffle M."/>
            <person name="Deutzmann R."/>
            <person name="Mollenhauer J."/>
            <person name="von der Mark K."/>
        </authorList>
    </citation>
    <scope>NUCLEOTIDE SEQUENCE [MRNA]</scope>
    <scope>PARTIAL PROTEIN SEQUENCE</scope>
</reference>
<reference key="2">
    <citation type="journal article" date="1990" name="J. Biol. Chem.">
        <authorList>
            <person name="Fernandez M.-P."/>
            <person name="Selmin O."/>
            <person name="Martin G.R."/>
            <person name="Yamada Y."/>
            <person name="Pfaeffle M."/>
            <person name="Deutzmann R."/>
            <person name="Mollenhauer J."/>
            <person name="von der Mark K."/>
        </authorList>
    </citation>
    <scope>ERRATUM OF PUBMED:2833522</scope>
    <scope>SEQUENCE REVISION</scope>
</reference>
<reference key="3">
    <citation type="journal article" date="1989" name="Trends Biochem. Sci.">
        <title>Alternative splicing or cloning artefact?</title>
        <authorList>
            <person name="Moss S.E."/>
            <person name="Crumpton M.J."/>
        </authorList>
    </citation>
    <scope>SUGGEST SEQUENCING ERROR</scope>
</reference>
<reference key="4">
    <citation type="journal article" date="1988" name="EMBO J.">
        <title>Biosynthesis, secretion and extracellular localization of anchorin CII, a collagen-binding protein of the calpactin family.</title>
        <authorList>
            <person name="Pfaeffle M."/>
            <person name="Ruggiero F."/>
            <person name="Hofmann H."/>
            <person name="Fernandez M.-P."/>
            <person name="Selmin O."/>
            <person name="Yamada Y."/>
            <person name="Garrone R."/>
            <person name="von der Mark K."/>
        </authorList>
    </citation>
    <scope>SEQUENCE REVISION</scope>
    <scope>SUBCELLULAR LOCATION</scope>
</reference>
<reference key="5">
    <citation type="journal article" date="1990" name="EMBO J.">
        <authorList>
            <person name="Pfaeffle M."/>
            <person name="Ruggiero F."/>
            <person name="Hofmann H."/>
            <person name="Fernandez M.-P."/>
            <person name="Selmin O."/>
            <person name="Yamada Y."/>
            <person name="Garrone R."/>
            <person name="von der Mark K."/>
        </authorList>
    </citation>
    <scope>ERRATUM OF PUBMED:2847914</scope>
</reference>
<reference key="6">
    <citation type="journal article" date="1994" name="Gene">
        <title>Structure of the gene encoding anchorin CII (chick annexin V).</title>
        <authorList>
            <person name="Fernandez M.-P."/>
            <person name="Fernandez M.R."/>
            <person name="Morgan R.O."/>
        </authorList>
    </citation>
    <scope>NUCLEOTIDE SEQUENCE [GENOMIC DNA]</scope>
    <source>
        <strain>White leghorn</strain>
        <tissue>Liver</tissue>
    </source>
</reference>
<reference key="7">
    <citation type="journal article" date="1991" name="J. Biol. Chem.">
        <title>Matrix vesicle annexins exhibit proteolipid-like properties. Selective partitioning into lipophilic solvents under acidic conditions.</title>
        <authorList>
            <person name="Genge B.R."/>
            <person name="Wu L.N."/>
            <person name="Adkisson H.D. IV"/>
            <person name="Wuthier R.E."/>
        </authorList>
    </citation>
    <scope>PROTEIN SEQUENCE OF 188-199</scope>
</reference>
<reference key="8">
    <citation type="journal article" date="1993" name="Biochem. J.">
        <title>Isolation, characterization and localization of annexin V from chicken liver.</title>
        <authorList>
            <person name="Boustead C.M."/>
            <person name="Brown R."/>
            <person name="Walker J.H."/>
        </authorList>
    </citation>
    <scope>PARTIAL PROTEIN SEQUENCE</scope>
    <source>
        <tissue>Liver</tissue>
    </source>
</reference>
<reference key="9">
    <citation type="journal article" date="1993" name="Biochemistry">
        <title>Structure of chicken annexin V at 2.25-A resolution.</title>
        <authorList>
            <person name="Bewley M.C."/>
            <person name="Boustead C.M."/>
            <person name="Walker C.M."/>
            <person name="Waller C.M."/>
            <person name="Huber R."/>
        </authorList>
    </citation>
    <scope>X-RAY CRYSTALLOGRAPHY (2.5 ANGSTROMS)</scope>
</reference>
<name>ANXA5_CHICK</name>
<accession>P17153</accession>
<comment type="function">
    <text>Collagen-binding protein.</text>
</comment>
<comment type="interaction">
    <interactant intactId="EBI-1635947">
        <id>P17153</id>
    </interactant>
    <interactant intactId="EBI-1635766">
        <id>Q8AYS8</id>
        <label>KCNMA1</label>
    </interactant>
    <organismsDiffer>false</organismsDiffer>
    <experiments>3</experiments>
</comment>
<comment type="domain">
    <text>A pair of annexin repeats may form one binding site for calcium and phospholipid.</text>
</comment>
<comment type="similarity">
    <text evidence="1 2">Belongs to the annexin family.</text>
</comment>
<gene>
    <name type="primary">ANXA5</name>
    <name type="synonym">ANX5</name>
</gene>